<protein>
    <recommendedName>
        <fullName>Oxygen regulatory protein NreC</fullName>
    </recommendedName>
    <alternativeName>
        <fullName>Nitrogen regulation protein C</fullName>
    </alternativeName>
</protein>
<name>NREC_STAAM</name>
<proteinExistence type="inferred from homology"/>
<comment type="function">
    <text evidence="1">Member of the two-component regulatory system NreB/NreC involved in the control of dissimilatory nitrate/nitrite reduction in response to oxygen. Phosphorylated NreC binds to a GC-rich palindromic sequence at the promoters of the nitrate (narGHJI) and nitrite (nir) reductase operons, as well as the putative nitrate transporter gene narT, and activates their expression (By similarity).</text>
</comment>
<comment type="subcellular location">
    <subcellularLocation>
        <location evidence="4">Cytoplasm</location>
    </subcellularLocation>
</comment>
<comment type="PTM">
    <text evidence="1">Phosphorylated by NreB.</text>
</comment>
<sequence length="217" mass="24368">MKIVIADDHAVVRTGFSMILNYQNDMEVVATAADGVEAYQKVMEYKPDVLLMDLSMPPGESGLIATSKIADSFPETKILILTMFDDEEYLFHVLRNGAKGYILKNAPDEQLLLAIRTVYKGETYVDMKLTTSLVNEFVSNSNQDTANTTDPFKILSKRELEILPLIAKGYGNKEIAEKLFVSVKTVEAHKTHIMTKLGLKSKPELVEYALKKKLLEF</sequence>
<dbReference type="EMBL" id="BA000017">
    <property type="protein sequence ID" value="BAB58553.1"/>
    <property type="molecule type" value="Genomic_DNA"/>
</dbReference>
<dbReference type="RefSeq" id="WP_000706315.1">
    <property type="nucleotide sequence ID" value="NC_002758.2"/>
</dbReference>
<dbReference type="SMR" id="Q99RN8"/>
<dbReference type="KEGG" id="sav:SAV2391"/>
<dbReference type="HOGENOM" id="CLU_000445_90_1_9"/>
<dbReference type="PhylomeDB" id="Q99RN8"/>
<dbReference type="Proteomes" id="UP000002481">
    <property type="component" value="Chromosome"/>
</dbReference>
<dbReference type="GO" id="GO:0005737">
    <property type="term" value="C:cytoplasm"/>
    <property type="evidence" value="ECO:0007669"/>
    <property type="project" value="UniProtKB-SubCell"/>
</dbReference>
<dbReference type="GO" id="GO:0003677">
    <property type="term" value="F:DNA binding"/>
    <property type="evidence" value="ECO:0007669"/>
    <property type="project" value="UniProtKB-KW"/>
</dbReference>
<dbReference type="GO" id="GO:0000160">
    <property type="term" value="P:phosphorelay signal transduction system"/>
    <property type="evidence" value="ECO:0007669"/>
    <property type="project" value="UniProtKB-KW"/>
</dbReference>
<dbReference type="GO" id="GO:0006355">
    <property type="term" value="P:regulation of DNA-templated transcription"/>
    <property type="evidence" value="ECO:0007669"/>
    <property type="project" value="InterPro"/>
</dbReference>
<dbReference type="CDD" id="cd06170">
    <property type="entry name" value="LuxR_C_like"/>
    <property type="match status" value="1"/>
</dbReference>
<dbReference type="CDD" id="cd17535">
    <property type="entry name" value="REC_NarL-like"/>
    <property type="match status" value="1"/>
</dbReference>
<dbReference type="Gene3D" id="3.40.50.2300">
    <property type="match status" value="1"/>
</dbReference>
<dbReference type="InterPro" id="IPR011006">
    <property type="entry name" value="CheY-like_superfamily"/>
</dbReference>
<dbReference type="InterPro" id="IPR016032">
    <property type="entry name" value="Sig_transdc_resp-reg_C-effctor"/>
</dbReference>
<dbReference type="InterPro" id="IPR001789">
    <property type="entry name" value="Sig_transdc_resp-reg_receiver"/>
</dbReference>
<dbReference type="InterPro" id="IPR000792">
    <property type="entry name" value="Tscrpt_reg_LuxR_C"/>
</dbReference>
<dbReference type="InterPro" id="IPR039420">
    <property type="entry name" value="WalR-like"/>
</dbReference>
<dbReference type="PANTHER" id="PTHR43214:SF37">
    <property type="entry name" value="TRANSCRIPTIONAL REGULATORY PROTEIN YDFI"/>
    <property type="match status" value="1"/>
</dbReference>
<dbReference type="PANTHER" id="PTHR43214">
    <property type="entry name" value="TWO-COMPONENT RESPONSE REGULATOR"/>
    <property type="match status" value="1"/>
</dbReference>
<dbReference type="Pfam" id="PF00196">
    <property type="entry name" value="GerE"/>
    <property type="match status" value="1"/>
</dbReference>
<dbReference type="Pfam" id="PF00072">
    <property type="entry name" value="Response_reg"/>
    <property type="match status" value="1"/>
</dbReference>
<dbReference type="PRINTS" id="PR00038">
    <property type="entry name" value="HTHLUXR"/>
</dbReference>
<dbReference type="SMART" id="SM00421">
    <property type="entry name" value="HTH_LUXR"/>
    <property type="match status" value="1"/>
</dbReference>
<dbReference type="SMART" id="SM00448">
    <property type="entry name" value="REC"/>
    <property type="match status" value="1"/>
</dbReference>
<dbReference type="SUPFAM" id="SSF46894">
    <property type="entry name" value="C-terminal effector domain of the bipartite response regulators"/>
    <property type="match status" value="1"/>
</dbReference>
<dbReference type="SUPFAM" id="SSF52172">
    <property type="entry name" value="CheY-like"/>
    <property type="match status" value="1"/>
</dbReference>
<dbReference type="PROSITE" id="PS00622">
    <property type="entry name" value="HTH_LUXR_1"/>
    <property type="match status" value="1"/>
</dbReference>
<dbReference type="PROSITE" id="PS50043">
    <property type="entry name" value="HTH_LUXR_2"/>
    <property type="match status" value="1"/>
</dbReference>
<dbReference type="PROSITE" id="PS50110">
    <property type="entry name" value="RESPONSE_REGULATORY"/>
    <property type="match status" value="1"/>
</dbReference>
<accession>Q99RN8</accession>
<evidence type="ECO:0000250" key="1"/>
<evidence type="ECO:0000255" key="2">
    <source>
        <dbReference type="PROSITE-ProRule" id="PRU00169"/>
    </source>
</evidence>
<evidence type="ECO:0000255" key="3">
    <source>
        <dbReference type="PROSITE-ProRule" id="PRU00411"/>
    </source>
</evidence>
<evidence type="ECO:0000305" key="4"/>
<organism>
    <name type="scientific">Staphylococcus aureus (strain Mu50 / ATCC 700699)</name>
    <dbReference type="NCBI Taxonomy" id="158878"/>
    <lineage>
        <taxon>Bacteria</taxon>
        <taxon>Bacillati</taxon>
        <taxon>Bacillota</taxon>
        <taxon>Bacilli</taxon>
        <taxon>Bacillales</taxon>
        <taxon>Staphylococcaceae</taxon>
        <taxon>Staphylococcus</taxon>
    </lineage>
</organism>
<reference key="1">
    <citation type="journal article" date="2001" name="Lancet">
        <title>Whole genome sequencing of meticillin-resistant Staphylococcus aureus.</title>
        <authorList>
            <person name="Kuroda M."/>
            <person name="Ohta T."/>
            <person name="Uchiyama I."/>
            <person name="Baba T."/>
            <person name="Yuzawa H."/>
            <person name="Kobayashi I."/>
            <person name="Cui L."/>
            <person name="Oguchi A."/>
            <person name="Aoki K."/>
            <person name="Nagai Y."/>
            <person name="Lian J.-Q."/>
            <person name="Ito T."/>
            <person name="Kanamori M."/>
            <person name="Matsumaru H."/>
            <person name="Maruyama A."/>
            <person name="Murakami H."/>
            <person name="Hosoyama A."/>
            <person name="Mizutani-Ui Y."/>
            <person name="Takahashi N.K."/>
            <person name="Sawano T."/>
            <person name="Inoue R."/>
            <person name="Kaito C."/>
            <person name="Sekimizu K."/>
            <person name="Hirakawa H."/>
            <person name="Kuhara S."/>
            <person name="Goto S."/>
            <person name="Yabuzaki J."/>
            <person name="Kanehisa M."/>
            <person name="Yamashita A."/>
            <person name="Oshima K."/>
            <person name="Furuya K."/>
            <person name="Yoshino C."/>
            <person name="Shiba T."/>
            <person name="Hattori M."/>
            <person name="Ogasawara N."/>
            <person name="Hayashi H."/>
            <person name="Hiramatsu K."/>
        </authorList>
    </citation>
    <scope>NUCLEOTIDE SEQUENCE [LARGE SCALE GENOMIC DNA]</scope>
    <source>
        <strain>Mu50 / ATCC 700699</strain>
    </source>
</reference>
<feature type="chain" id="PRO_0000349349" description="Oxygen regulatory protein NreC">
    <location>
        <begin position="1"/>
        <end position="217"/>
    </location>
</feature>
<feature type="domain" description="Response regulatory" evidence="2">
    <location>
        <begin position="2"/>
        <end position="119"/>
    </location>
</feature>
<feature type="domain" description="HTH luxR-type" evidence="3">
    <location>
        <begin position="148"/>
        <end position="213"/>
    </location>
</feature>
<feature type="DNA-binding region" description="H-T-H motif" evidence="3">
    <location>
        <begin position="172"/>
        <end position="191"/>
    </location>
</feature>
<feature type="modified residue" description="4-aspartylphosphate" evidence="2">
    <location>
        <position position="53"/>
    </location>
</feature>
<keyword id="KW-0010">Activator</keyword>
<keyword id="KW-0963">Cytoplasm</keyword>
<keyword id="KW-0238">DNA-binding</keyword>
<keyword id="KW-0597">Phosphoprotein</keyword>
<keyword id="KW-0804">Transcription</keyword>
<keyword id="KW-0805">Transcription regulation</keyword>
<keyword id="KW-0902">Two-component regulatory system</keyword>
<gene>
    <name type="primary">nreC</name>
    <name type="ordered locus">SAV2391</name>
</gene>